<dbReference type="EC" id="4.6.1.12" evidence="1"/>
<dbReference type="EMBL" id="CP000612">
    <property type="protein sequence ID" value="ABO48737.1"/>
    <property type="molecule type" value="Genomic_DNA"/>
</dbReference>
<dbReference type="RefSeq" id="WP_011876578.1">
    <property type="nucleotide sequence ID" value="NC_009253.1"/>
</dbReference>
<dbReference type="SMR" id="A4J0Y4"/>
<dbReference type="STRING" id="349161.Dred_0188"/>
<dbReference type="KEGG" id="drm:Dred_0188"/>
<dbReference type="eggNOG" id="COG0245">
    <property type="taxonomic scope" value="Bacteria"/>
</dbReference>
<dbReference type="HOGENOM" id="CLU_084630_2_0_9"/>
<dbReference type="OrthoDB" id="9804336at2"/>
<dbReference type="UniPathway" id="UPA00056">
    <property type="reaction ID" value="UER00095"/>
</dbReference>
<dbReference type="Proteomes" id="UP000001556">
    <property type="component" value="Chromosome"/>
</dbReference>
<dbReference type="GO" id="GO:0008685">
    <property type="term" value="F:2-C-methyl-D-erythritol 2,4-cyclodiphosphate synthase activity"/>
    <property type="evidence" value="ECO:0007669"/>
    <property type="project" value="UniProtKB-UniRule"/>
</dbReference>
<dbReference type="GO" id="GO:0046872">
    <property type="term" value="F:metal ion binding"/>
    <property type="evidence" value="ECO:0007669"/>
    <property type="project" value="UniProtKB-KW"/>
</dbReference>
<dbReference type="GO" id="GO:0019288">
    <property type="term" value="P:isopentenyl diphosphate biosynthetic process, methylerythritol 4-phosphate pathway"/>
    <property type="evidence" value="ECO:0007669"/>
    <property type="project" value="UniProtKB-UniRule"/>
</dbReference>
<dbReference type="GO" id="GO:0016114">
    <property type="term" value="P:terpenoid biosynthetic process"/>
    <property type="evidence" value="ECO:0007669"/>
    <property type="project" value="InterPro"/>
</dbReference>
<dbReference type="CDD" id="cd00554">
    <property type="entry name" value="MECDP_synthase"/>
    <property type="match status" value="1"/>
</dbReference>
<dbReference type="FunFam" id="3.30.1330.50:FF:000001">
    <property type="entry name" value="2-C-methyl-D-erythritol 2,4-cyclodiphosphate synthase"/>
    <property type="match status" value="1"/>
</dbReference>
<dbReference type="Gene3D" id="3.30.1330.50">
    <property type="entry name" value="2-C-methyl-D-erythritol 2,4-cyclodiphosphate synthase"/>
    <property type="match status" value="1"/>
</dbReference>
<dbReference type="HAMAP" id="MF_00107">
    <property type="entry name" value="IspF"/>
    <property type="match status" value="1"/>
</dbReference>
<dbReference type="InterPro" id="IPR003526">
    <property type="entry name" value="MECDP_synthase"/>
</dbReference>
<dbReference type="InterPro" id="IPR020555">
    <property type="entry name" value="MECDP_synthase_CS"/>
</dbReference>
<dbReference type="InterPro" id="IPR036571">
    <property type="entry name" value="MECDP_synthase_sf"/>
</dbReference>
<dbReference type="NCBIfam" id="TIGR00151">
    <property type="entry name" value="ispF"/>
    <property type="match status" value="1"/>
</dbReference>
<dbReference type="PANTHER" id="PTHR43181">
    <property type="entry name" value="2-C-METHYL-D-ERYTHRITOL 2,4-CYCLODIPHOSPHATE SYNTHASE, CHLOROPLASTIC"/>
    <property type="match status" value="1"/>
</dbReference>
<dbReference type="PANTHER" id="PTHR43181:SF1">
    <property type="entry name" value="2-C-METHYL-D-ERYTHRITOL 2,4-CYCLODIPHOSPHATE SYNTHASE, CHLOROPLASTIC"/>
    <property type="match status" value="1"/>
</dbReference>
<dbReference type="Pfam" id="PF02542">
    <property type="entry name" value="YgbB"/>
    <property type="match status" value="1"/>
</dbReference>
<dbReference type="SUPFAM" id="SSF69765">
    <property type="entry name" value="IpsF-like"/>
    <property type="match status" value="1"/>
</dbReference>
<dbReference type="PROSITE" id="PS01350">
    <property type="entry name" value="ISPF"/>
    <property type="match status" value="1"/>
</dbReference>
<sequence length="157" mass="16837">MRVGIGYDVHKLVAERQLVLGGVVIPYEFGLLGHSDADVLIHAIMDALLGAAALGDIGRHFPDNEPRYKGISSMKLLEEVREKLAVKGYSVNNLDAVVVAQAPKLAPYIQAMQQNIARTLQVDLDSVNIKATTTEHLGFAGRGEGIGAYAVCTLQQG</sequence>
<feature type="chain" id="PRO_1000075910" description="2-C-methyl-D-erythritol 2,4-cyclodiphosphate synthase">
    <location>
        <begin position="1"/>
        <end position="157"/>
    </location>
</feature>
<feature type="binding site" evidence="1">
    <location>
        <begin position="8"/>
        <end position="10"/>
    </location>
    <ligand>
        <name>4-CDP-2-C-methyl-D-erythritol 2-phosphate</name>
        <dbReference type="ChEBI" id="CHEBI:57919"/>
    </ligand>
</feature>
<feature type="binding site" evidence="1">
    <location>
        <position position="8"/>
    </location>
    <ligand>
        <name>a divalent metal cation</name>
        <dbReference type="ChEBI" id="CHEBI:60240"/>
    </ligand>
</feature>
<feature type="binding site" evidence="1">
    <location>
        <position position="10"/>
    </location>
    <ligand>
        <name>a divalent metal cation</name>
        <dbReference type="ChEBI" id="CHEBI:60240"/>
    </ligand>
</feature>
<feature type="binding site" evidence="1">
    <location>
        <begin position="34"/>
        <end position="35"/>
    </location>
    <ligand>
        <name>4-CDP-2-C-methyl-D-erythritol 2-phosphate</name>
        <dbReference type="ChEBI" id="CHEBI:57919"/>
    </ligand>
</feature>
<feature type="binding site" evidence="1">
    <location>
        <position position="42"/>
    </location>
    <ligand>
        <name>a divalent metal cation</name>
        <dbReference type="ChEBI" id="CHEBI:60240"/>
    </ligand>
</feature>
<feature type="binding site" evidence="1">
    <location>
        <begin position="56"/>
        <end position="58"/>
    </location>
    <ligand>
        <name>4-CDP-2-C-methyl-D-erythritol 2-phosphate</name>
        <dbReference type="ChEBI" id="CHEBI:57919"/>
    </ligand>
</feature>
<feature type="binding site" evidence="1">
    <location>
        <begin position="61"/>
        <end position="65"/>
    </location>
    <ligand>
        <name>4-CDP-2-C-methyl-D-erythritol 2-phosphate</name>
        <dbReference type="ChEBI" id="CHEBI:57919"/>
    </ligand>
</feature>
<feature type="binding site" evidence="1">
    <location>
        <begin position="132"/>
        <end position="135"/>
    </location>
    <ligand>
        <name>4-CDP-2-C-methyl-D-erythritol 2-phosphate</name>
        <dbReference type="ChEBI" id="CHEBI:57919"/>
    </ligand>
</feature>
<feature type="binding site" evidence="1">
    <location>
        <position position="139"/>
    </location>
    <ligand>
        <name>4-CDP-2-C-methyl-D-erythritol 2-phosphate</name>
        <dbReference type="ChEBI" id="CHEBI:57919"/>
    </ligand>
</feature>
<feature type="binding site" evidence="1">
    <location>
        <position position="142"/>
    </location>
    <ligand>
        <name>4-CDP-2-C-methyl-D-erythritol 2-phosphate</name>
        <dbReference type="ChEBI" id="CHEBI:57919"/>
    </ligand>
</feature>
<feature type="site" description="Transition state stabilizer" evidence="1">
    <location>
        <position position="34"/>
    </location>
</feature>
<feature type="site" description="Transition state stabilizer" evidence="1">
    <location>
        <position position="133"/>
    </location>
</feature>
<evidence type="ECO:0000255" key="1">
    <source>
        <dbReference type="HAMAP-Rule" id="MF_00107"/>
    </source>
</evidence>
<organism>
    <name type="scientific">Desulforamulus reducens (strain ATCC BAA-1160 / DSM 100696 / MI-1)</name>
    <name type="common">Desulfotomaculum reducens</name>
    <dbReference type="NCBI Taxonomy" id="349161"/>
    <lineage>
        <taxon>Bacteria</taxon>
        <taxon>Bacillati</taxon>
        <taxon>Bacillota</taxon>
        <taxon>Clostridia</taxon>
        <taxon>Eubacteriales</taxon>
        <taxon>Peptococcaceae</taxon>
        <taxon>Desulforamulus</taxon>
    </lineage>
</organism>
<keyword id="KW-0414">Isoprene biosynthesis</keyword>
<keyword id="KW-0456">Lyase</keyword>
<keyword id="KW-0479">Metal-binding</keyword>
<keyword id="KW-1185">Reference proteome</keyword>
<proteinExistence type="inferred from homology"/>
<comment type="function">
    <text evidence="1">Involved in the biosynthesis of isopentenyl diphosphate (IPP) and dimethylallyl diphosphate (DMAPP), two major building blocks of isoprenoid compounds. Catalyzes the conversion of 4-diphosphocytidyl-2-C-methyl-D-erythritol 2-phosphate (CDP-ME2P) to 2-C-methyl-D-erythritol 2,4-cyclodiphosphate (ME-CPP) with a corresponding release of cytidine 5-monophosphate (CMP).</text>
</comment>
<comment type="catalytic activity">
    <reaction evidence="1">
        <text>4-CDP-2-C-methyl-D-erythritol 2-phosphate = 2-C-methyl-D-erythritol 2,4-cyclic diphosphate + CMP</text>
        <dbReference type="Rhea" id="RHEA:23864"/>
        <dbReference type="ChEBI" id="CHEBI:57919"/>
        <dbReference type="ChEBI" id="CHEBI:58483"/>
        <dbReference type="ChEBI" id="CHEBI:60377"/>
        <dbReference type="EC" id="4.6.1.12"/>
    </reaction>
</comment>
<comment type="cofactor">
    <cofactor evidence="1">
        <name>a divalent metal cation</name>
        <dbReference type="ChEBI" id="CHEBI:60240"/>
    </cofactor>
    <text evidence="1">Binds 1 divalent metal cation per subunit.</text>
</comment>
<comment type="pathway">
    <text evidence="1">Isoprenoid biosynthesis; isopentenyl diphosphate biosynthesis via DXP pathway; isopentenyl diphosphate from 1-deoxy-D-xylulose 5-phosphate: step 4/6.</text>
</comment>
<comment type="subunit">
    <text evidence="1">Homotrimer.</text>
</comment>
<comment type="similarity">
    <text evidence="1">Belongs to the IspF family.</text>
</comment>
<accession>A4J0Y4</accession>
<protein>
    <recommendedName>
        <fullName evidence="1">2-C-methyl-D-erythritol 2,4-cyclodiphosphate synthase</fullName>
        <shortName evidence="1">MECDP-synthase</shortName>
        <shortName evidence="1">MECPP-synthase</shortName>
        <shortName evidence="1">MECPS</shortName>
        <ecNumber evidence="1">4.6.1.12</ecNumber>
    </recommendedName>
</protein>
<name>ISPF_DESRM</name>
<reference key="1">
    <citation type="submission" date="2007-03" db="EMBL/GenBank/DDBJ databases">
        <title>Complete sequence of Desulfotomaculum reducens MI-1.</title>
        <authorList>
            <consortium name="US DOE Joint Genome Institute"/>
            <person name="Copeland A."/>
            <person name="Lucas S."/>
            <person name="Lapidus A."/>
            <person name="Barry K."/>
            <person name="Detter J.C."/>
            <person name="Glavina del Rio T."/>
            <person name="Hammon N."/>
            <person name="Israni S."/>
            <person name="Dalin E."/>
            <person name="Tice H."/>
            <person name="Pitluck S."/>
            <person name="Sims D."/>
            <person name="Brettin T."/>
            <person name="Bruce D."/>
            <person name="Han C."/>
            <person name="Tapia R."/>
            <person name="Schmutz J."/>
            <person name="Larimer F."/>
            <person name="Land M."/>
            <person name="Hauser L."/>
            <person name="Kyrpides N."/>
            <person name="Kim E."/>
            <person name="Tebo B.M."/>
            <person name="Richardson P."/>
        </authorList>
    </citation>
    <scope>NUCLEOTIDE SEQUENCE [LARGE SCALE GENOMIC DNA]</scope>
    <source>
        <strain>ATCC BAA-1160 / DSM 100696 / MI-1</strain>
    </source>
</reference>
<gene>
    <name evidence="1" type="primary">ispF</name>
    <name type="ordered locus">Dred_0188</name>
</gene>